<keyword id="KW-0687">Ribonucleoprotein</keyword>
<keyword id="KW-0689">Ribosomal protein</keyword>
<keyword id="KW-0694">RNA-binding</keyword>
<keyword id="KW-0699">rRNA-binding</keyword>
<keyword id="KW-0820">tRNA-binding</keyword>
<feature type="chain" id="PRO_0000230560" description="Small ribosomal subunit protein uS13">
    <location>
        <begin position="1"/>
        <end position="125"/>
    </location>
</feature>
<organism>
    <name type="scientific">Rickettsia felis (strain ATCC VR-1525 / URRWXCal2)</name>
    <name type="common">Rickettsia azadi</name>
    <dbReference type="NCBI Taxonomy" id="315456"/>
    <lineage>
        <taxon>Bacteria</taxon>
        <taxon>Pseudomonadati</taxon>
        <taxon>Pseudomonadota</taxon>
        <taxon>Alphaproteobacteria</taxon>
        <taxon>Rickettsiales</taxon>
        <taxon>Rickettsiaceae</taxon>
        <taxon>Rickettsieae</taxon>
        <taxon>Rickettsia</taxon>
        <taxon>spotted fever group</taxon>
    </lineage>
</organism>
<proteinExistence type="inferred from homology"/>
<name>RS13_RICFE</name>
<dbReference type="EMBL" id="CP000053">
    <property type="protein sequence ID" value="AAY61151.1"/>
    <property type="molecule type" value="Genomic_DNA"/>
</dbReference>
<dbReference type="SMR" id="Q4UMQ7"/>
<dbReference type="STRING" id="315456.RF_0300"/>
<dbReference type="KEGG" id="rfe:RF_0300"/>
<dbReference type="eggNOG" id="COG0099">
    <property type="taxonomic scope" value="Bacteria"/>
</dbReference>
<dbReference type="HOGENOM" id="CLU_103849_1_2_5"/>
<dbReference type="OrthoDB" id="9803610at2"/>
<dbReference type="Proteomes" id="UP000008548">
    <property type="component" value="Chromosome"/>
</dbReference>
<dbReference type="GO" id="GO:0005829">
    <property type="term" value="C:cytosol"/>
    <property type="evidence" value="ECO:0007669"/>
    <property type="project" value="TreeGrafter"/>
</dbReference>
<dbReference type="GO" id="GO:0015935">
    <property type="term" value="C:small ribosomal subunit"/>
    <property type="evidence" value="ECO:0007669"/>
    <property type="project" value="TreeGrafter"/>
</dbReference>
<dbReference type="GO" id="GO:0019843">
    <property type="term" value="F:rRNA binding"/>
    <property type="evidence" value="ECO:0007669"/>
    <property type="project" value="UniProtKB-UniRule"/>
</dbReference>
<dbReference type="GO" id="GO:0003735">
    <property type="term" value="F:structural constituent of ribosome"/>
    <property type="evidence" value="ECO:0007669"/>
    <property type="project" value="InterPro"/>
</dbReference>
<dbReference type="GO" id="GO:0000049">
    <property type="term" value="F:tRNA binding"/>
    <property type="evidence" value="ECO:0007669"/>
    <property type="project" value="UniProtKB-UniRule"/>
</dbReference>
<dbReference type="GO" id="GO:0006412">
    <property type="term" value="P:translation"/>
    <property type="evidence" value="ECO:0007669"/>
    <property type="project" value="UniProtKB-UniRule"/>
</dbReference>
<dbReference type="FunFam" id="1.10.8.50:FF:000001">
    <property type="entry name" value="30S ribosomal protein S13"/>
    <property type="match status" value="1"/>
</dbReference>
<dbReference type="Gene3D" id="1.10.8.50">
    <property type="match status" value="1"/>
</dbReference>
<dbReference type="Gene3D" id="4.10.910.10">
    <property type="entry name" value="30s ribosomal protein s13, domain 2"/>
    <property type="match status" value="1"/>
</dbReference>
<dbReference type="HAMAP" id="MF_01315">
    <property type="entry name" value="Ribosomal_uS13"/>
    <property type="match status" value="1"/>
</dbReference>
<dbReference type="InterPro" id="IPR027437">
    <property type="entry name" value="Rbsml_uS13_C"/>
</dbReference>
<dbReference type="InterPro" id="IPR001892">
    <property type="entry name" value="Ribosomal_uS13"/>
</dbReference>
<dbReference type="InterPro" id="IPR010979">
    <property type="entry name" value="Ribosomal_uS13-like_H2TH"/>
</dbReference>
<dbReference type="InterPro" id="IPR019980">
    <property type="entry name" value="Ribosomal_uS13_bac-type"/>
</dbReference>
<dbReference type="InterPro" id="IPR018269">
    <property type="entry name" value="Ribosomal_uS13_CS"/>
</dbReference>
<dbReference type="NCBIfam" id="TIGR03631">
    <property type="entry name" value="uS13_bact"/>
    <property type="match status" value="1"/>
</dbReference>
<dbReference type="PANTHER" id="PTHR10871">
    <property type="entry name" value="30S RIBOSOMAL PROTEIN S13/40S RIBOSOMAL PROTEIN S18"/>
    <property type="match status" value="1"/>
</dbReference>
<dbReference type="PANTHER" id="PTHR10871:SF1">
    <property type="entry name" value="SMALL RIBOSOMAL SUBUNIT PROTEIN US13M"/>
    <property type="match status" value="1"/>
</dbReference>
<dbReference type="Pfam" id="PF00416">
    <property type="entry name" value="Ribosomal_S13"/>
    <property type="match status" value="1"/>
</dbReference>
<dbReference type="PIRSF" id="PIRSF002134">
    <property type="entry name" value="Ribosomal_S13"/>
    <property type="match status" value="1"/>
</dbReference>
<dbReference type="SUPFAM" id="SSF46946">
    <property type="entry name" value="S13-like H2TH domain"/>
    <property type="match status" value="1"/>
</dbReference>
<dbReference type="PROSITE" id="PS00646">
    <property type="entry name" value="RIBOSOMAL_S13_1"/>
    <property type="match status" value="1"/>
</dbReference>
<dbReference type="PROSITE" id="PS50159">
    <property type="entry name" value="RIBOSOMAL_S13_2"/>
    <property type="match status" value="1"/>
</dbReference>
<gene>
    <name evidence="1" type="primary">rpsM</name>
    <name type="ordered locus">RF_0300</name>
</gene>
<evidence type="ECO:0000255" key="1">
    <source>
        <dbReference type="HAMAP-Rule" id="MF_01315"/>
    </source>
</evidence>
<evidence type="ECO:0000305" key="2"/>
<sequence>MARIASVNIPDNKRLVVSLTYIYGLGPAMAAEICNKAKISKDKKVKELTDQELISLRNIIESEYKVEGDLRREVTLNIKKKKDIRCYQGLRHIRKLPVRGQNTHSNARTRKGKAIAIAGKKKAVK</sequence>
<comment type="function">
    <text evidence="1">Located at the top of the head of the 30S subunit, it contacts several helices of the 16S rRNA. In the 70S ribosome it contacts the 23S rRNA (bridge B1a) and protein L5 of the 50S subunit (bridge B1b), connecting the 2 subunits; these bridges are implicated in subunit movement. Contacts the tRNAs in the A and P-sites.</text>
</comment>
<comment type="subunit">
    <text evidence="1">Part of the 30S ribosomal subunit. Forms a loose heterodimer with protein S19. Forms two bridges to the 50S subunit in the 70S ribosome.</text>
</comment>
<comment type="similarity">
    <text evidence="1">Belongs to the universal ribosomal protein uS13 family.</text>
</comment>
<reference key="1">
    <citation type="journal article" date="2005" name="PLoS Biol.">
        <title>The genome sequence of Rickettsia felis identifies the first putative conjugative plasmid in an obligate intracellular parasite.</title>
        <authorList>
            <person name="Ogata H."/>
            <person name="Renesto P."/>
            <person name="Audic S."/>
            <person name="Robert C."/>
            <person name="Blanc G."/>
            <person name="Fournier P.-E."/>
            <person name="Parinello H."/>
            <person name="Claverie J.-M."/>
            <person name="Raoult D."/>
        </authorList>
    </citation>
    <scope>NUCLEOTIDE SEQUENCE [LARGE SCALE GENOMIC DNA]</scope>
    <source>
        <strain>ATCC VR-1525 / URRWXCal2</strain>
    </source>
</reference>
<accession>Q4UMQ7</accession>
<protein>
    <recommendedName>
        <fullName evidence="1">Small ribosomal subunit protein uS13</fullName>
    </recommendedName>
    <alternativeName>
        <fullName evidence="2">30S ribosomal protein S13</fullName>
    </alternativeName>
</protein>